<accession>Q3ASI6</accession>
<dbReference type="EC" id="2.3.1.35" evidence="1"/>
<dbReference type="EC" id="2.3.1.1" evidence="1"/>
<dbReference type="EMBL" id="CP000108">
    <property type="protein sequence ID" value="ABB28039.1"/>
    <property type="molecule type" value="Genomic_DNA"/>
</dbReference>
<dbReference type="SMR" id="Q3ASI6"/>
<dbReference type="STRING" id="340177.Cag_0773"/>
<dbReference type="MEROPS" id="T05.002"/>
<dbReference type="KEGG" id="cch:Cag_0773"/>
<dbReference type="eggNOG" id="COG1364">
    <property type="taxonomic scope" value="Bacteria"/>
</dbReference>
<dbReference type="HOGENOM" id="CLU_027172_1_0_10"/>
<dbReference type="OrthoDB" id="9804242at2"/>
<dbReference type="UniPathway" id="UPA00068">
    <property type="reaction ID" value="UER00106"/>
</dbReference>
<dbReference type="UniPathway" id="UPA00068">
    <property type="reaction ID" value="UER00111"/>
</dbReference>
<dbReference type="GO" id="GO:0005737">
    <property type="term" value="C:cytoplasm"/>
    <property type="evidence" value="ECO:0007669"/>
    <property type="project" value="UniProtKB-SubCell"/>
</dbReference>
<dbReference type="GO" id="GO:0004358">
    <property type="term" value="F:glutamate N-acetyltransferase activity"/>
    <property type="evidence" value="ECO:0007669"/>
    <property type="project" value="UniProtKB-UniRule"/>
</dbReference>
<dbReference type="GO" id="GO:0004042">
    <property type="term" value="F:L-glutamate N-acetyltransferase activity"/>
    <property type="evidence" value="ECO:0007669"/>
    <property type="project" value="UniProtKB-UniRule"/>
</dbReference>
<dbReference type="GO" id="GO:0006526">
    <property type="term" value="P:L-arginine biosynthetic process"/>
    <property type="evidence" value="ECO:0007669"/>
    <property type="project" value="UniProtKB-UniRule"/>
</dbReference>
<dbReference type="GO" id="GO:0006592">
    <property type="term" value="P:ornithine biosynthetic process"/>
    <property type="evidence" value="ECO:0007669"/>
    <property type="project" value="TreeGrafter"/>
</dbReference>
<dbReference type="CDD" id="cd02152">
    <property type="entry name" value="OAT"/>
    <property type="match status" value="1"/>
</dbReference>
<dbReference type="FunFam" id="3.10.20.340:FF:000001">
    <property type="entry name" value="Arginine biosynthesis bifunctional protein ArgJ, chloroplastic"/>
    <property type="match status" value="1"/>
</dbReference>
<dbReference type="FunFam" id="3.60.70.12:FF:000001">
    <property type="entry name" value="Arginine biosynthesis bifunctional protein ArgJ, chloroplastic"/>
    <property type="match status" value="1"/>
</dbReference>
<dbReference type="Gene3D" id="3.10.20.340">
    <property type="entry name" value="ArgJ beta chain, C-terminal domain"/>
    <property type="match status" value="1"/>
</dbReference>
<dbReference type="Gene3D" id="3.60.70.12">
    <property type="entry name" value="L-amino peptidase D-ALA esterase/amidase"/>
    <property type="match status" value="1"/>
</dbReference>
<dbReference type="HAMAP" id="MF_01106">
    <property type="entry name" value="ArgJ"/>
    <property type="match status" value="1"/>
</dbReference>
<dbReference type="InterPro" id="IPR002813">
    <property type="entry name" value="Arg_biosynth_ArgJ"/>
</dbReference>
<dbReference type="InterPro" id="IPR016117">
    <property type="entry name" value="ArgJ-like_dom_sf"/>
</dbReference>
<dbReference type="InterPro" id="IPR042195">
    <property type="entry name" value="ArgJ_beta_C"/>
</dbReference>
<dbReference type="NCBIfam" id="TIGR00120">
    <property type="entry name" value="ArgJ"/>
    <property type="match status" value="1"/>
</dbReference>
<dbReference type="NCBIfam" id="NF003802">
    <property type="entry name" value="PRK05388.1"/>
    <property type="match status" value="1"/>
</dbReference>
<dbReference type="PANTHER" id="PTHR23100">
    <property type="entry name" value="ARGININE BIOSYNTHESIS BIFUNCTIONAL PROTEIN ARGJ"/>
    <property type="match status" value="1"/>
</dbReference>
<dbReference type="PANTHER" id="PTHR23100:SF0">
    <property type="entry name" value="ARGININE BIOSYNTHESIS BIFUNCTIONAL PROTEIN ARGJ, MITOCHONDRIAL"/>
    <property type="match status" value="1"/>
</dbReference>
<dbReference type="Pfam" id="PF01960">
    <property type="entry name" value="ArgJ"/>
    <property type="match status" value="1"/>
</dbReference>
<dbReference type="SUPFAM" id="SSF56266">
    <property type="entry name" value="DmpA/ArgJ-like"/>
    <property type="match status" value="1"/>
</dbReference>
<reference key="1">
    <citation type="submission" date="2005-08" db="EMBL/GenBank/DDBJ databases">
        <title>Complete sequence of Chlorobium chlorochromatii CaD3.</title>
        <authorList>
            <consortium name="US DOE Joint Genome Institute"/>
            <person name="Copeland A."/>
            <person name="Lucas S."/>
            <person name="Lapidus A."/>
            <person name="Barry K."/>
            <person name="Detter J.C."/>
            <person name="Glavina T."/>
            <person name="Hammon N."/>
            <person name="Israni S."/>
            <person name="Pitluck S."/>
            <person name="Bryant D."/>
            <person name="Schmutz J."/>
            <person name="Larimer F."/>
            <person name="Land M."/>
            <person name="Kyrpides N."/>
            <person name="Ivanova N."/>
            <person name="Richardson P."/>
        </authorList>
    </citation>
    <scope>NUCLEOTIDE SEQUENCE [LARGE SCALE GENOMIC DNA]</scope>
    <source>
        <strain>CaD3</strain>
    </source>
</reference>
<organism>
    <name type="scientific">Chlorobium chlorochromatii (strain CaD3)</name>
    <dbReference type="NCBI Taxonomy" id="340177"/>
    <lineage>
        <taxon>Bacteria</taxon>
        <taxon>Pseudomonadati</taxon>
        <taxon>Chlorobiota</taxon>
        <taxon>Chlorobiia</taxon>
        <taxon>Chlorobiales</taxon>
        <taxon>Chlorobiaceae</taxon>
        <taxon>Chlorobium/Pelodictyon group</taxon>
        <taxon>Chlorobium</taxon>
    </lineage>
</organism>
<evidence type="ECO:0000255" key="1">
    <source>
        <dbReference type="HAMAP-Rule" id="MF_01106"/>
    </source>
</evidence>
<keyword id="KW-0012">Acyltransferase</keyword>
<keyword id="KW-0028">Amino-acid biosynthesis</keyword>
<keyword id="KW-0055">Arginine biosynthesis</keyword>
<keyword id="KW-0068">Autocatalytic cleavage</keyword>
<keyword id="KW-0963">Cytoplasm</keyword>
<keyword id="KW-0511">Multifunctional enzyme</keyword>
<keyword id="KW-0808">Transferase</keyword>
<name>ARGJ_CHLCH</name>
<comment type="function">
    <text evidence="1">Catalyzes two activities which are involved in the cyclic version of arginine biosynthesis: the synthesis of N-acetylglutamate from glutamate and acetyl-CoA as the acetyl donor, and of ornithine by transacetylation between N(2)-acetylornithine and glutamate.</text>
</comment>
<comment type="catalytic activity">
    <reaction evidence="1">
        <text>N(2)-acetyl-L-ornithine + L-glutamate = N-acetyl-L-glutamate + L-ornithine</text>
        <dbReference type="Rhea" id="RHEA:15349"/>
        <dbReference type="ChEBI" id="CHEBI:29985"/>
        <dbReference type="ChEBI" id="CHEBI:44337"/>
        <dbReference type="ChEBI" id="CHEBI:46911"/>
        <dbReference type="ChEBI" id="CHEBI:57805"/>
        <dbReference type="EC" id="2.3.1.35"/>
    </reaction>
</comment>
<comment type="catalytic activity">
    <reaction evidence="1">
        <text>L-glutamate + acetyl-CoA = N-acetyl-L-glutamate + CoA + H(+)</text>
        <dbReference type="Rhea" id="RHEA:24292"/>
        <dbReference type="ChEBI" id="CHEBI:15378"/>
        <dbReference type="ChEBI" id="CHEBI:29985"/>
        <dbReference type="ChEBI" id="CHEBI:44337"/>
        <dbReference type="ChEBI" id="CHEBI:57287"/>
        <dbReference type="ChEBI" id="CHEBI:57288"/>
        <dbReference type="EC" id="2.3.1.1"/>
    </reaction>
</comment>
<comment type="pathway">
    <text evidence="1">Amino-acid biosynthesis; L-arginine biosynthesis; L-ornithine and N-acetyl-L-glutamate from L-glutamate and N(2)-acetyl-L-ornithine (cyclic): step 1/1.</text>
</comment>
<comment type="pathway">
    <text evidence="1">Amino-acid biosynthesis; L-arginine biosynthesis; N(2)-acetyl-L-ornithine from L-glutamate: step 1/4.</text>
</comment>
<comment type="subunit">
    <text evidence="1">Heterotetramer of two alpha and two beta chains.</text>
</comment>
<comment type="subcellular location">
    <subcellularLocation>
        <location evidence="1">Cytoplasm</location>
    </subcellularLocation>
</comment>
<comment type="similarity">
    <text evidence="1">Belongs to the ArgJ family.</text>
</comment>
<protein>
    <recommendedName>
        <fullName evidence="1">Arginine biosynthesis bifunctional protein ArgJ</fullName>
    </recommendedName>
    <domain>
        <recommendedName>
            <fullName evidence="1">Glutamate N-acetyltransferase</fullName>
            <ecNumber evidence="1">2.3.1.35</ecNumber>
        </recommendedName>
        <alternativeName>
            <fullName evidence="1">Ornithine acetyltransferase</fullName>
            <shortName evidence="1">OATase</shortName>
        </alternativeName>
        <alternativeName>
            <fullName evidence="1">Ornithine transacetylase</fullName>
        </alternativeName>
    </domain>
    <domain>
        <recommendedName>
            <fullName evidence="1">Amino-acid acetyltransferase</fullName>
            <ecNumber evidence="1">2.3.1.1</ecNumber>
        </recommendedName>
        <alternativeName>
            <fullName evidence="1">N-acetylglutamate synthase</fullName>
            <shortName evidence="1">AGSase</shortName>
        </alternativeName>
    </domain>
    <component>
        <recommendedName>
            <fullName evidence="1">Arginine biosynthesis bifunctional protein ArgJ alpha chain</fullName>
        </recommendedName>
    </component>
    <component>
        <recommendedName>
            <fullName evidence="1">Arginine biosynthesis bifunctional protein ArgJ beta chain</fullName>
        </recommendedName>
    </component>
</protein>
<feature type="chain" id="PRO_0000227216" description="Arginine biosynthesis bifunctional protein ArgJ alpha chain" evidence="1">
    <location>
        <begin position="1"/>
        <end position="217"/>
    </location>
</feature>
<feature type="chain" id="PRO_0000227217" description="Arginine biosynthesis bifunctional protein ArgJ beta chain" evidence="1">
    <location>
        <begin position="218"/>
        <end position="429"/>
    </location>
</feature>
<feature type="active site" description="Nucleophile" evidence="1">
    <location>
        <position position="218"/>
    </location>
</feature>
<feature type="binding site" evidence="1">
    <location>
        <position position="181"/>
    </location>
    <ligand>
        <name>substrate</name>
    </ligand>
</feature>
<feature type="binding site" evidence="1">
    <location>
        <position position="207"/>
    </location>
    <ligand>
        <name>substrate</name>
    </ligand>
</feature>
<feature type="binding site" evidence="1">
    <location>
        <position position="218"/>
    </location>
    <ligand>
        <name>substrate</name>
    </ligand>
</feature>
<feature type="binding site" evidence="1">
    <location>
        <position position="302"/>
    </location>
    <ligand>
        <name>substrate</name>
    </ligand>
</feature>
<feature type="binding site" evidence="1">
    <location>
        <position position="424"/>
    </location>
    <ligand>
        <name>substrate</name>
    </ligand>
</feature>
<feature type="binding site" evidence="1">
    <location>
        <position position="429"/>
    </location>
    <ligand>
        <name>substrate</name>
    </ligand>
</feature>
<feature type="site" description="Involved in the stabilization of negative charge on the oxyanion by the formation of the oxyanion hole" evidence="1">
    <location>
        <position position="144"/>
    </location>
</feature>
<feature type="site" description="Involved in the stabilization of negative charge on the oxyanion by the formation of the oxyanion hole" evidence="1">
    <location>
        <position position="145"/>
    </location>
</feature>
<feature type="site" description="Cleavage; by autolysis" evidence="1">
    <location>
        <begin position="217"/>
        <end position="218"/>
    </location>
</feature>
<proteinExistence type="inferred from homology"/>
<sequence length="429" mass="44607">MLTTLNKALDTIHRLAAETVWSEGVTPMKIGDSGEFGFWPKGFSVGATAGNIRYSGRDDMMLIVSDSPASAAALFTTNLCCAAPVVLSRNHLQQSAASMRAIVCNSGNANAATGKQGMADAQAMADAVAEQLSIKPEEVLVASTGVIGQLLPMERVHAGIVALPATLQSNSVLGAVSAIMTTDTFPKFYAVDVALSSGTVRLCGIAKGSGMICPNMATMLGFLATDAAIAPELLQTLLSEANRKSFNAITVDGDTSTNDMVAMLASGAGAEVVAGSKDEALFSAALQSLMILLAKLIVIDGEGATKLVEITVKGAVSNEEAELAARTIANSSLVKTAIHGEDANWGRIIAAAGRSGARFNEDELELWFNEMPILKKGLIADFSEDEAAIILAQPSYSITLSLGNGSGSATLWSCDLSKEYVEINGSYRS</sequence>
<gene>
    <name evidence="1" type="primary">argJ</name>
    <name type="ordered locus">Cag_0773</name>
</gene>